<sequence length="230" mass="23975">MSPLSNFARTALACAVAALLGGCVIAGDVRPYPTMAPIQPIMPPQAQPTAGAIYAAGPTLQLYSDRRARDVGDLLTISLLENTTAQTSANTATNKESNLSLGTPSIFGAPVTLGGKDILSASAKGARDFTGKGNSAQSNRLQGNVTVTVIQRLPNGNLVVQGQKNLRLNQGDELVQVQGIVRPGDISQDNTIPSSRVAEARIVYGGRGPVAQSNAMGWLSRFFNSGLTPF</sequence>
<organism>
    <name type="scientific">Stenotrophomonas maltophilia (strain R551-3)</name>
    <dbReference type="NCBI Taxonomy" id="391008"/>
    <lineage>
        <taxon>Bacteria</taxon>
        <taxon>Pseudomonadati</taxon>
        <taxon>Pseudomonadota</taxon>
        <taxon>Gammaproteobacteria</taxon>
        <taxon>Lysobacterales</taxon>
        <taxon>Lysobacteraceae</taxon>
        <taxon>Stenotrophomonas</taxon>
        <taxon>Stenotrophomonas maltophilia group</taxon>
    </lineage>
</organism>
<name>FLGH_STRM5</name>
<feature type="signal peptide" evidence="1">
    <location>
        <begin position="1"/>
        <end position="22"/>
    </location>
</feature>
<feature type="chain" id="PRO_1000123960" description="Flagellar L-ring protein">
    <location>
        <begin position="23"/>
        <end position="230"/>
    </location>
</feature>
<feature type="lipid moiety-binding region" description="N-palmitoyl cysteine" evidence="1">
    <location>
        <position position="23"/>
    </location>
</feature>
<feature type="lipid moiety-binding region" description="S-diacylglycerol cysteine" evidence="1">
    <location>
        <position position="23"/>
    </location>
</feature>
<evidence type="ECO:0000255" key="1">
    <source>
        <dbReference type="HAMAP-Rule" id="MF_00415"/>
    </source>
</evidence>
<proteinExistence type="inferred from homology"/>
<keyword id="KW-0975">Bacterial flagellum</keyword>
<keyword id="KW-0998">Cell outer membrane</keyword>
<keyword id="KW-0449">Lipoprotein</keyword>
<keyword id="KW-0472">Membrane</keyword>
<keyword id="KW-0564">Palmitate</keyword>
<keyword id="KW-0732">Signal</keyword>
<dbReference type="EMBL" id="CP001111">
    <property type="protein sequence ID" value="ACF51604.1"/>
    <property type="molecule type" value="Genomic_DNA"/>
</dbReference>
<dbReference type="RefSeq" id="WP_012510987.1">
    <property type="nucleotide sequence ID" value="NC_011071.1"/>
</dbReference>
<dbReference type="SMR" id="B4SIL5"/>
<dbReference type="STRING" id="391008.Smal_1900"/>
<dbReference type="KEGG" id="smt:Smal_1900"/>
<dbReference type="eggNOG" id="COG2063">
    <property type="taxonomic scope" value="Bacteria"/>
</dbReference>
<dbReference type="HOGENOM" id="CLU_069313_0_1_6"/>
<dbReference type="OrthoDB" id="9789463at2"/>
<dbReference type="Proteomes" id="UP000001867">
    <property type="component" value="Chromosome"/>
</dbReference>
<dbReference type="GO" id="GO:0009427">
    <property type="term" value="C:bacterial-type flagellum basal body, distal rod, L ring"/>
    <property type="evidence" value="ECO:0007669"/>
    <property type="project" value="InterPro"/>
</dbReference>
<dbReference type="GO" id="GO:0009279">
    <property type="term" value="C:cell outer membrane"/>
    <property type="evidence" value="ECO:0007669"/>
    <property type="project" value="UniProtKB-SubCell"/>
</dbReference>
<dbReference type="GO" id="GO:0003774">
    <property type="term" value="F:cytoskeletal motor activity"/>
    <property type="evidence" value="ECO:0007669"/>
    <property type="project" value="InterPro"/>
</dbReference>
<dbReference type="GO" id="GO:0071973">
    <property type="term" value="P:bacterial-type flagellum-dependent cell motility"/>
    <property type="evidence" value="ECO:0007669"/>
    <property type="project" value="InterPro"/>
</dbReference>
<dbReference type="HAMAP" id="MF_00415">
    <property type="entry name" value="FlgH"/>
    <property type="match status" value="1"/>
</dbReference>
<dbReference type="InterPro" id="IPR000527">
    <property type="entry name" value="Flag_Lring"/>
</dbReference>
<dbReference type="NCBIfam" id="NF001304">
    <property type="entry name" value="PRK00249.1-4"/>
    <property type="match status" value="1"/>
</dbReference>
<dbReference type="PANTHER" id="PTHR34933">
    <property type="entry name" value="FLAGELLAR L-RING PROTEIN"/>
    <property type="match status" value="1"/>
</dbReference>
<dbReference type="PANTHER" id="PTHR34933:SF1">
    <property type="entry name" value="FLAGELLAR L-RING PROTEIN"/>
    <property type="match status" value="1"/>
</dbReference>
<dbReference type="Pfam" id="PF02107">
    <property type="entry name" value="FlgH"/>
    <property type="match status" value="1"/>
</dbReference>
<dbReference type="PRINTS" id="PR01008">
    <property type="entry name" value="FLGLRINGFLGH"/>
</dbReference>
<gene>
    <name evidence="1" type="primary">flgH</name>
    <name type="ordered locus">Smal_1900</name>
</gene>
<protein>
    <recommendedName>
        <fullName evidence="1">Flagellar L-ring protein</fullName>
    </recommendedName>
    <alternativeName>
        <fullName evidence="1">Basal body L-ring protein</fullName>
    </alternativeName>
</protein>
<comment type="function">
    <text evidence="1">Assembles around the rod to form the L-ring and probably protects the motor/basal body from shearing forces during rotation.</text>
</comment>
<comment type="subunit">
    <text evidence="1">The basal body constitutes a major portion of the flagellar organelle and consists of four rings (L,P,S, and M) mounted on a central rod.</text>
</comment>
<comment type="subcellular location">
    <subcellularLocation>
        <location evidence="1">Cell outer membrane</location>
        <topology evidence="1">Lipid-anchor</topology>
    </subcellularLocation>
    <subcellularLocation>
        <location evidence="1">Bacterial flagellum basal body</location>
    </subcellularLocation>
</comment>
<comment type="similarity">
    <text evidence="1">Belongs to the FlgH family.</text>
</comment>
<accession>B4SIL5</accession>
<reference key="1">
    <citation type="submission" date="2008-06" db="EMBL/GenBank/DDBJ databases">
        <title>Complete sequence of Stenotrophomonas maltophilia R551-3.</title>
        <authorList>
            <consortium name="US DOE Joint Genome Institute"/>
            <person name="Lucas S."/>
            <person name="Copeland A."/>
            <person name="Lapidus A."/>
            <person name="Glavina del Rio T."/>
            <person name="Dalin E."/>
            <person name="Tice H."/>
            <person name="Pitluck S."/>
            <person name="Chain P."/>
            <person name="Malfatti S."/>
            <person name="Shin M."/>
            <person name="Vergez L."/>
            <person name="Lang D."/>
            <person name="Schmutz J."/>
            <person name="Larimer F."/>
            <person name="Land M."/>
            <person name="Hauser L."/>
            <person name="Kyrpides N."/>
            <person name="Mikhailova N."/>
            <person name="Taghavi S."/>
            <person name="Monchy S."/>
            <person name="Newman L."/>
            <person name="Vangronsveld J."/>
            <person name="van der Lelie D."/>
            <person name="Richardson P."/>
        </authorList>
    </citation>
    <scope>NUCLEOTIDE SEQUENCE [LARGE SCALE GENOMIC DNA]</scope>
    <source>
        <strain>R551-3</strain>
    </source>
</reference>